<evidence type="ECO:0000255" key="1">
    <source>
        <dbReference type="HAMAP-Rule" id="MF_00087"/>
    </source>
</evidence>
<feature type="chain" id="PRO_1000190503" description="Glutamyl-tRNA reductase">
    <location>
        <begin position="1"/>
        <end position="444"/>
    </location>
</feature>
<feature type="active site" description="Nucleophile" evidence="1">
    <location>
        <position position="50"/>
    </location>
</feature>
<feature type="binding site" evidence="1">
    <location>
        <begin position="49"/>
        <end position="52"/>
    </location>
    <ligand>
        <name>substrate</name>
    </ligand>
</feature>
<feature type="binding site" evidence="1">
    <location>
        <position position="109"/>
    </location>
    <ligand>
        <name>substrate</name>
    </ligand>
</feature>
<feature type="binding site" evidence="1">
    <location>
        <begin position="114"/>
        <end position="116"/>
    </location>
    <ligand>
        <name>substrate</name>
    </ligand>
</feature>
<feature type="binding site" evidence="1">
    <location>
        <position position="120"/>
    </location>
    <ligand>
        <name>substrate</name>
    </ligand>
</feature>
<feature type="binding site" evidence="1">
    <location>
        <begin position="189"/>
        <end position="194"/>
    </location>
    <ligand>
        <name>NADP(+)</name>
        <dbReference type="ChEBI" id="CHEBI:58349"/>
    </ligand>
</feature>
<feature type="site" description="Important for activity" evidence="1">
    <location>
        <position position="99"/>
    </location>
</feature>
<protein>
    <recommendedName>
        <fullName evidence="1">Glutamyl-tRNA reductase</fullName>
        <shortName evidence="1">GluTR</shortName>
        <ecNumber evidence="1">1.2.1.70</ecNumber>
    </recommendedName>
</protein>
<sequence>MHILVVSVNYRTAPVEFREKLTFQAAELERAMTTLQNQKSVLENVIVSTCNRTEIYAVVDQLHTGRYYIKKFLADWFQLEIEEVAPYLTIFEQDGAIDHLFRVTCGLDSMVVGETQILGQIKDSFLEAQQVKATGTIFNELFKQVITLAKRAHSETTIGESAMSVSYAAVELGKKIFGELTDCHVLILGAGKMGELALQNLYGSGARKVTVMNRTLSKAEVMAEKYMGHAKPLSELQCALLEADILISSTGASDYVITKEMMTKVEKMRSGRPLFMVDIAVPRDIDPAIDELEGSFLYDIDDLQGVVEANRAERLKEAEKIQFMIEEEIVLFKTWLSTLGVVPLISALRDKALAIQSETMESLERKIPNLSDRERKVISKHTKSIINQLLKDPILVAKEIAAEEGADEKLALFAKIFDLEMEDVESRAEEVEHKRAWTPSVPSL</sequence>
<gene>
    <name evidence="1" type="primary">hemA</name>
    <name type="ordered locus">BCA_4578</name>
</gene>
<reference key="1">
    <citation type="submission" date="2009-02" db="EMBL/GenBank/DDBJ databases">
        <title>Genome sequence of Bacillus cereus 03BB102.</title>
        <authorList>
            <person name="Dodson R.J."/>
            <person name="Jackson P."/>
            <person name="Munk A.C."/>
            <person name="Brettin T."/>
            <person name="Bruce D."/>
            <person name="Detter C."/>
            <person name="Tapia R."/>
            <person name="Han C."/>
            <person name="Sutton G."/>
            <person name="Sims D."/>
        </authorList>
    </citation>
    <scope>NUCLEOTIDE SEQUENCE [LARGE SCALE GENOMIC DNA]</scope>
    <source>
        <strain>03BB102</strain>
    </source>
</reference>
<proteinExistence type="inferred from homology"/>
<accession>C1ETR2</accession>
<organism>
    <name type="scientific">Bacillus cereus (strain 03BB102)</name>
    <dbReference type="NCBI Taxonomy" id="572264"/>
    <lineage>
        <taxon>Bacteria</taxon>
        <taxon>Bacillati</taxon>
        <taxon>Bacillota</taxon>
        <taxon>Bacilli</taxon>
        <taxon>Bacillales</taxon>
        <taxon>Bacillaceae</taxon>
        <taxon>Bacillus</taxon>
        <taxon>Bacillus cereus group</taxon>
    </lineage>
</organism>
<keyword id="KW-0521">NADP</keyword>
<keyword id="KW-0560">Oxidoreductase</keyword>
<keyword id="KW-0627">Porphyrin biosynthesis</keyword>
<dbReference type="EC" id="1.2.1.70" evidence="1"/>
<dbReference type="EMBL" id="CP001407">
    <property type="protein sequence ID" value="ACO26752.1"/>
    <property type="molecule type" value="Genomic_DNA"/>
</dbReference>
<dbReference type="RefSeq" id="WP_000547862.1">
    <property type="nucleotide sequence ID" value="NC_012472.1"/>
</dbReference>
<dbReference type="SMR" id="C1ETR2"/>
<dbReference type="KEGG" id="bcx:BCA_4578"/>
<dbReference type="PATRIC" id="fig|572264.18.peg.4526"/>
<dbReference type="UniPathway" id="UPA00251">
    <property type="reaction ID" value="UER00316"/>
</dbReference>
<dbReference type="Proteomes" id="UP000002210">
    <property type="component" value="Chromosome"/>
</dbReference>
<dbReference type="GO" id="GO:0008883">
    <property type="term" value="F:glutamyl-tRNA reductase activity"/>
    <property type="evidence" value="ECO:0007669"/>
    <property type="project" value="UniProtKB-UniRule"/>
</dbReference>
<dbReference type="GO" id="GO:0050661">
    <property type="term" value="F:NADP binding"/>
    <property type="evidence" value="ECO:0007669"/>
    <property type="project" value="InterPro"/>
</dbReference>
<dbReference type="GO" id="GO:0006782">
    <property type="term" value="P:protoporphyrinogen IX biosynthetic process"/>
    <property type="evidence" value="ECO:0007669"/>
    <property type="project" value="UniProtKB-UniRule"/>
</dbReference>
<dbReference type="CDD" id="cd05213">
    <property type="entry name" value="NAD_bind_Glutamyl_tRNA_reduct"/>
    <property type="match status" value="1"/>
</dbReference>
<dbReference type="FunFam" id="3.30.460.30:FF:000001">
    <property type="entry name" value="Glutamyl-tRNA reductase"/>
    <property type="match status" value="1"/>
</dbReference>
<dbReference type="FunFam" id="3.40.50.720:FF:000031">
    <property type="entry name" value="Glutamyl-tRNA reductase"/>
    <property type="match status" value="1"/>
</dbReference>
<dbReference type="Gene3D" id="3.30.460.30">
    <property type="entry name" value="Glutamyl-tRNA reductase, N-terminal domain"/>
    <property type="match status" value="1"/>
</dbReference>
<dbReference type="Gene3D" id="3.40.50.720">
    <property type="entry name" value="NAD(P)-binding Rossmann-like Domain"/>
    <property type="match status" value="1"/>
</dbReference>
<dbReference type="HAMAP" id="MF_00087">
    <property type="entry name" value="Glu_tRNA_reductase"/>
    <property type="match status" value="1"/>
</dbReference>
<dbReference type="InterPro" id="IPR000343">
    <property type="entry name" value="4pyrrol_synth_GluRdtase"/>
</dbReference>
<dbReference type="InterPro" id="IPR015896">
    <property type="entry name" value="4pyrrol_synth_GluRdtase_dimer"/>
</dbReference>
<dbReference type="InterPro" id="IPR015895">
    <property type="entry name" value="4pyrrol_synth_GluRdtase_N"/>
</dbReference>
<dbReference type="InterPro" id="IPR018214">
    <property type="entry name" value="GluRdtase_CS"/>
</dbReference>
<dbReference type="InterPro" id="IPR036453">
    <property type="entry name" value="GluRdtase_dimer_dom_sf"/>
</dbReference>
<dbReference type="InterPro" id="IPR036343">
    <property type="entry name" value="GluRdtase_N_sf"/>
</dbReference>
<dbReference type="InterPro" id="IPR036291">
    <property type="entry name" value="NAD(P)-bd_dom_sf"/>
</dbReference>
<dbReference type="InterPro" id="IPR006151">
    <property type="entry name" value="Shikm_DH/Glu-tRNA_Rdtase"/>
</dbReference>
<dbReference type="NCBIfam" id="TIGR01035">
    <property type="entry name" value="hemA"/>
    <property type="match status" value="1"/>
</dbReference>
<dbReference type="PANTHER" id="PTHR43120">
    <property type="entry name" value="GLUTAMYL-TRNA REDUCTASE 1, CHLOROPLASTIC"/>
    <property type="match status" value="1"/>
</dbReference>
<dbReference type="PANTHER" id="PTHR43120:SF1">
    <property type="entry name" value="GLUTAMYL-TRNA REDUCTASE 1, CHLOROPLASTIC"/>
    <property type="match status" value="1"/>
</dbReference>
<dbReference type="Pfam" id="PF00745">
    <property type="entry name" value="GlutR_dimer"/>
    <property type="match status" value="1"/>
</dbReference>
<dbReference type="Pfam" id="PF05201">
    <property type="entry name" value="GlutR_N"/>
    <property type="match status" value="1"/>
</dbReference>
<dbReference type="Pfam" id="PF01488">
    <property type="entry name" value="Shikimate_DH"/>
    <property type="match status" value="1"/>
</dbReference>
<dbReference type="PIRSF" id="PIRSF000445">
    <property type="entry name" value="4pyrrol_synth_GluRdtase"/>
    <property type="match status" value="1"/>
</dbReference>
<dbReference type="SUPFAM" id="SSF69742">
    <property type="entry name" value="Glutamyl tRNA-reductase catalytic, N-terminal domain"/>
    <property type="match status" value="1"/>
</dbReference>
<dbReference type="SUPFAM" id="SSF69075">
    <property type="entry name" value="Glutamyl tRNA-reductase dimerization domain"/>
    <property type="match status" value="1"/>
</dbReference>
<dbReference type="SUPFAM" id="SSF51735">
    <property type="entry name" value="NAD(P)-binding Rossmann-fold domains"/>
    <property type="match status" value="1"/>
</dbReference>
<dbReference type="PROSITE" id="PS00747">
    <property type="entry name" value="GLUTR"/>
    <property type="match status" value="1"/>
</dbReference>
<name>HEM1_BACC3</name>
<comment type="function">
    <text evidence="1">Catalyzes the NADPH-dependent reduction of glutamyl-tRNA(Glu) to glutamate 1-semialdehyde (GSA).</text>
</comment>
<comment type="catalytic activity">
    <reaction evidence="1">
        <text>(S)-4-amino-5-oxopentanoate + tRNA(Glu) + NADP(+) = L-glutamyl-tRNA(Glu) + NADPH + H(+)</text>
        <dbReference type="Rhea" id="RHEA:12344"/>
        <dbReference type="Rhea" id="RHEA-COMP:9663"/>
        <dbReference type="Rhea" id="RHEA-COMP:9680"/>
        <dbReference type="ChEBI" id="CHEBI:15378"/>
        <dbReference type="ChEBI" id="CHEBI:57501"/>
        <dbReference type="ChEBI" id="CHEBI:57783"/>
        <dbReference type="ChEBI" id="CHEBI:58349"/>
        <dbReference type="ChEBI" id="CHEBI:78442"/>
        <dbReference type="ChEBI" id="CHEBI:78520"/>
        <dbReference type="EC" id="1.2.1.70"/>
    </reaction>
</comment>
<comment type="pathway">
    <text evidence="1">Porphyrin-containing compound metabolism; protoporphyrin-IX biosynthesis; 5-aminolevulinate from L-glutamyl-tRNA(Glu): step 1/2.</text>
</comment>
<comment type="subunit">
    <text evidence="1">Homodimer.</text>
</comment>
<comment type="domain">
    <text evidence="1">Possesses an unusual extended V-shaped dimeric structure with each monomer consisting of three distinct domains arranged along a curved 'spinal' alpha-helix. The N-terminal catalytic domain specifically recognizes the glutamate moiety of the substrate. The second domain is the NADPH-binding domain, and the third C-terminal domain is responsible for dimerization.</text>
</comment>
<comment type="miscellaneous">
    <text evidence="1">During catalysis, the active site Cys acts as a nucleophile attacking the alpha-carbonyl group of tRNA-bound glutamate with the formation of a thioester intermediate between enzyme and glutamate, and the concomitant release of tRNA(Glu). The thioester intermediate is finally reduced by direct hydride transfer from NADPH, to form the product GSA.</text>
</comment>
<comment type="similarity">
    <text evidence="1">Belongs to the glutamyl-tRNA reductase family.</text>
</comment>